<feature type="chain" id="PRO_0000210262" description="Syntaxin-52">
    <location>
        <begin position="1"/>
        <end position="233"/>
    </location>
</feature>
<feature type="topological domain" description="Cytoplasmic" evidence="2">
    <location>
        <begin position="1"/>
        <end position="209"/>
    </location>
</feature>
<feature type="transmembrane region" description="Helical; Anchor for type IV membrane protein" evidence="2">
    <location>
        <begin position="210"/>
        <end position="230"/>
    </location>
</feature>
<feature type="topological domain" description="Vesicular" evidence="2">
    <location>
        <begin position="231"/>
        <end position="233"/>
    </location>
</feature>
<feature type="domain" description="t-SNARE coiled-coil homology" evidence="3">
    <location>
        <begin position="137"/>
        <end position="199"/>
    </location>
</feature>
<organism>
    <name type="scientific">Arabidopsis thaliana</name>
    <name type="common">Mouse-ear cress</name>
    <dbReference type="NCBI Taxonomy" id="3702"/>
    <lineage>
        <taxon>Eukaryota</taxon>
        <taxon>Viridiplantae</taxon>
        <taxon>Streptophyta</taxon>
        <taxon>Embryophyta</taxon>
        <taxon>Tracheophyta</taxon>
        <taxon>Spermatophyta</taxon>
        <taxon>Magnoliopsida</taxon>
        <taxon>eudicotyledons</taxon>
        <taxon>Gunneridae</taxon>
        <taxon>Pentapetalae</taxon>
        <taxon>rosids</taxon>
        <taxon>malvids</taxon>
        <taxon>Brassicales</taxon>
        <taxon>Brassicaceae</taxon>
        <taxon>Camelineae</taxon>
        <taxon>Arabidopsis</taxon>
    </lineage>
</organism>
<evidence type="ECO:0000250" key="1"/>
<evidence type="ECO:0000255" key="2"/>
<evidence type="ECO:0000255" key="3">
    <source>
        <dbReference type="PROSITE-ProRule" id="PRU00202"/>
    </source>
</evidence>
<evidence type="ECO:0000269" key="4">
    <source>
    </source>
</evidence>
<evidence type="ECO:0000305" key="5"/>
<proteinExistence type="evidence at protein level"/>
<sequence length="233" mass="26108">MASSSDPWMREYNEALKLSEDINGMMSERNASGLTGPDAQRRASAIRRKITILGTRLDSLQSLLVKVPGKQHVSEKEMNRRKDMVGNLRSKTNQVASALNMSNFANRDSLFGTDLKPDDAINRVSGMDNQGIVVFQRQVMREQDEGLEKLEETVMSTKHIALAVNEELTLQTRLIDDLDYDVDITDSRLRRVQKSLALMNKSMKSGCSCMSMLLSVLGIVGLALVIWLLVKYL</sequence>
<dbReference type="EMBL" id="AF355756">
    <property type="protein sequence ID" value="AAK40224.1"/>
    <property type="molecule type" value="mRNA"/>
</dbReference>
<dbReference type="EMBL" id="AC010793">
    <property type="protein sequence ID" value="AAF68106.1"/>
    <property type="status" value="ALT_SEQ"/>
    <property type="molecule type" value="Genomic_DNA"/>
</dbReference>
<dbReference type="EMBL" id="CP002684">
    <property type="protein sequence ID" value="AEE36269.1"/>
    <property type="molecule type" value="Genomic_DNA"/>
</dbReference>
<dbReference type="EMBL" id="CP002684">
    <property type="protein sequence ID" value="AEE36270.1"/>
    <property type="molecule type" value="Genomic_DNA"/>
</dbReference>
<dbReference type="EMBL" id="BT003941">
    <property type="protein sequence ID" value="AAO41986.1"/>
    <property type="molecule type" value="mRNA"/>
</dbReference>
<dbReference type="EMBL" id="BT006106">
    <property type="protein sequence ID" value="AAP04091.1"/>
    <property type="molecule type" value="mRNA"/>
</dbReference>
<dbReference type="EMBL" id="AY086285">
    <property type="protein sequence ID" value="AAM64357.1"/>
    <property type="molecule type" value="mRNA"/>
</dbReference>
<dbReference type="PIR" id="C96827">
    <property type="entry name" value="C96827"/>
</dbReference>
<dbReference type="RefSeq" id="NP_001031301.1">
    <property type="nucleotide sequence ID" value="NM_001036224.2"/>
</dbReference>
<dbReference type="RefSeq" id="NP_565213.1">
    <property type="nucleotide sequence ID" value="NM_106607.5"/>
</dbReference>
<dbReference type="SMR" id="Q94KK7"/>
<dbReference type="BioGRID" id="29516">
    <property type="interactions" value="3"/>
</dbReference>
<dbReference type="FunCoup" id="Q94KK7">
    <property type="interactions" value="3940"/>
</dbReference>
<dbReference type="IntAct" id="Q94KK7">
    <property type="interactions" value="1"/>
</dbReference>
<dbReference type="STRING" id="3702.Q94KK7"/>
<dbReference type="iPTMnet" id="Q94KK7"/>
<dbReference type="SwissPalm" id="Q94KK7"/>
<dbReference type="PaxDb" id="3702-AT1G79590.2"/>
<dbReference type="ProteomicsDB" id="233065"/>
<dbReference type="EnsemblPlants" id="AT1G79590.1">
    <property type="protein sequence ID" value="AT1G79590.1"/>
    <property type="gene ID" value="AT1G79590"/>
</dbReference>
<dbReference type="EnsemblPlants" id="AT1G79590.2">
    <property type="protein sequence ID" value="AT1G79590.2"/>
    <property type="gene ID" value="AT1G79590"/>
</dbReference>
<dbReference type="GeneID" id="844297"/>
<dbReference type="Gramene" id="AT1G79590.1">
    <property type="protein sequence ID" value="AT1G79590.1"/>
    <property type="gene ID" value="AT1G79590"/>
</dbReference>
<dbReference type="Gramene" id="AT1G79590.2">
    <property type="protein sequence ID" value="AT1G79590.2"/>
    <property type="gene ID" value="AT1G79590"/>
</dbReference>
<dbReference type="KEGG" id="ath:AT1G79590"/>
<dbReference type="Araport" id="AT1G79590"/>
<dbReference type="TAIR" id="AT1G79590">
    <property type="gene designation" value="SYP52"/>
</dbReference>
<dbReference type="eggNOG" id="KOG3202">
    <property type="taxonomic scope" value="Eukaryota"/>
</dbReference>
<dbReference type="HOGENOM" id="CLU_074236_0_0_1"/>
<dbReference type="InParanoid" id="Q94KK7"/>
<dbReference type="OMA" id="SAWQDQD"/>
<dbReference type="PhylomeDB" id="Q94KK7"/>
<dbReference type="PRO" id="PR:Q94KK7"/>
<dbReference type="Proteomes" id="UP000006548">
    <property type="component" value="Chromosome 1"/>
</dbReference>
<dbReference type="ExpressionAtlas" id="Q94KK7">
    <property type="expression patterns" value="baseline and differential"/>
</dbReference>
<dbReference type="GO" id="GO:0010008">
    <property type="term" value="C:endosome membrane"/>
    <property type="evidence" value="ECO:0000304"/>
    <property type="project" value="TAIR"/>
</dbReference>
<dbReference type="GO" id="GO:0005794">
    <property type="term" value="C:Golgi apparatus"/>
    <property type="evidence" value="ECO:0007669"/>
    <property type="project" value="UniProtKB-SubCell"/>
</dbReference>
<dbReference type="GO" id="GO:0000325">
    <property type="term" value="C:plant-type vacuole"/>
    <property type="evidence" value="ECO:0007005"/>
    <property type="project" value="TAIR"/>
</dbReference>
<dbReference type="GO" id="GO:0005484">
    <property type="term" value="F:SNAP receptor activity"/>
    <property type="evidence" value="ECO:0000304"/>
    <property type="project" value="TAIR"/>
</dbReference>
<dbReference type="GO" id="GO:0006886">
    <property type="term" value="P:intracellular protein transport"/>
    <property type="evidence" value="ECO:0007669"/>
    <property type="project" value="InterPro"/>
</dbReference>
<dbReference type="GO" id="GO:0016192">
    <property type="term" value="P:vesicle-mediated transport"/>
    <property type="evidence" value="ECO:0000304"/>
    <property type="project" value="TAIR"/>
</dbReference>
<dbReference type="CDD" id="cd15841">
    <property type="entry name" value="SNARE_Qc"/>
    <property type="match status" value="1"/>
</dbReference>
<dbReference type="FunFam" id="1.20.5.110:FF:000030">
    <property type="entry name" value="syntaxin-51 isoform X2"/>
    <property type="match status" value="1"/>
</dbReference>
<dbReference type="Gene3D" id="1.20.5.110">
    <property type="match status" value="1"/>
</dbReference>
<dbReference type="InterPro" id="IPR045242">
    <property type="entry name" value="Syntaxin"/>
</dbReference>
<dbReference type="InterPro" id="IPR006012">
    <property type="entry name" value="Syntaxin/epimorphin_CS"/>
</dbReference>
<dbReference type="InterPro" id="IPR000727">
    <property type="entry name" value="T_SNARE_dom"/>
</dbReference>
<dbReference type="PANTHER" id="PTHR19957">
    <property type="entry name" value="SYNTAXIN"/>
    <property type="match status" value="1"/>
</dbReference>
<dbReference type="PANTHER" id="PTHR19957:SF412">
    <property type="entry name" value="SYNTAXIN-52"/>
    <property type="match status" value="1"/>
</dbReference>
<dbReference type="Pfam" id="PF05739">
    <property type="entry name" value="SNARE"/>
    <property type="match status" value="1"/>
</dbReference>
<dbReference type="SMART" id="SM00397">
    <property type="entry name" value="t_SNARE"/>
    <property type="match status" value="1"/>
</dbReference>
<dbReference type="SUPFAM" id="SSF58038">
    <property type="entry name" value="SNARE fusion complex"/>
    <property type="match status" value="1"/>
</dbReference>
<dbReference type="PROSITE" id="PS00914">
    <property type="entry name" value="SYNTAXIN"/>
    <property type="match status" value="1"/>
</dbReference>
<dbReference type="PROSITE" id="PS50192">
    <property type="entry name" value="T_SNARE"/>
    <property type="match status" value="1"/>
</dbReference>
<keyword id="KW-0175">Coiled coil</keyword>
<keyword id="KW-0333">Golgi apparatus</keyword>
<keyword id="KW-0472">Membrane</keyword>
<keyword id="KW-0653">Protein transport</keyword>
<keyword id="KW-1185">Reference proteome</keyword>
<keyword id="KW-0812">Transmembrane</keyword>
<keyword id="KW-1133">Transmembrane helix</keyword>
<keyword id="KW-0813">Transport</keyword>
<name>SYP52_ARATH</name>
<comment type="function">
    <text evidence="1">Vesicle trafficking protein that functions in the secretory pathway.</text>
</comment>
<comment type="subunit">
    <text evidence="4">Interacts either with VTI11 and SYP21, or with VTI11 and SYP22 in the prevacuolar compartment, or with VTI12 and SYP61 in the trans-Golgi network to form t-SNARE complexes.</text>
</comment>
<comment type="subcellular location">
    <subcellularLocation>
        <location>Golgi apparatus</location>
        <location>trans-Golgi network membrane</location>
        <topology>Single-pass type IV membrane protein</topology>
    </subcellularLocation>
    <subcellularLocation>
        <location>Prevacuolar compartment membrane</location>
        <topology>Single-pass type IV membrane protein</topology>
    </subcellularLocation>
</comment>
<comment type="tissue specificity">
    <text>Expressed in root, leaf, stem, flower and silique.</text>
</comment>
<comment type="miscellaneous">
    <text>SYP51 and SYP52 may have redundant functions.</text>
</comment>
<comment type="similarity">
    <text evidence="5">Belongs to the syntaxin family.</text>
</comment>
<comment type="sequence caution" evidence="5">
    <conflict type="erroneous gene model prediction">
        <sequence resource="EMBL-CDS" id="AAF68106"/>
    </conflict>
</comment>
<accession>Q94KK7</accession>
<accession>Q9MA16</accession>
<protein>
    <recommendedName>
        <fullName>Syntaxin-52</fullName>
        <shortName>AtSYP52</shortName>
    </recommendedName>
</protein>
<gene>
    <name type="primary">SYP52</name>
    <name type="ordered locus">At1g79590</name>
    <name type="ORF">F20B17.2</name>
</gene>
<reference key="1">
    <citation type="journal article" date="2001" name="Mol. Biol. Cell">
        <title>Interactions between syntaxins identify at least five SNARE complexes within the Golgi/prevacuolar system of the Arabidopsis cell.</title>
        <authorList>
            <person name="Sanderfoot A.A."/>
            <person name="Kovaleva V."/>
            <person name="Bassham D.C."/>
            <person name="Raikhel N.V."/>
        </authorList>
    </citation>
    <scope>NUCLEOTIDE SEQUENCE [MRNA]</scope>
    <scope>INTERACTION WITH SYP21; SYP22; SYP61; VTI11 AND VTI12</scope>
</reference>
<reference key="2">
    <citation type="journal article" date="2000" name="Nature">
        <title>Sequence and analysis of chromosome 1 of the plant Arabidopsis thaliana.</title>
        <authorList>
            <person name="Theologis A."/>
            <person name="Ecker J.R."/>
            <person name="Palm C.J."/>
            <person name="Federspiel N.A."/>
            <person name="Kaul S."/>
            <person name="White O."/>
            <person name="Alonso J."/>
            <person name="Altafi H."/>
            <person name="Araujo R."/>
            <person name="Bowman C.L."/>
            <person name="Brooks S.Y."/>
            <person name="Buehler E."/>
            <person name="Chan A."/>
            <person name="Chao Q."/>
            <person name="Chen H."/>
            <person name="Cheuk R.F."/>
            <person name="Chin C.W."/>
            <person name="Chung M.K."/>
            <person name="Conn L."/>
            <person name="Conway A.B."/>
            <person name="Conway A.R."/>
            <person name="Creasy T.H."/>
            <person name="Dewar K."/>
            <person name="Dunn P."/>
            <person name="Etgu P."/>
            <person name="Feldblyum T.V."/>
            <person name="Feng J.-D."/>
            <person name="Fong B."/>
            <person name="Fujii C.Y."/>
            <person name="Gill J.E."/>
            <person name="Goldsmith A.D."/>
            <person name="Haas B."/>
            <person name="Hansen N.F."/>
            <person name="Hughes B."/>
            <person name="Huizar L."/>
            <person name="Hunter J.L."/>
            <person name="Jenkins J."/>
            <person name="Johnson-Hopson C."/>
            <person name="Khan S."/>
            <person name="Khaykin E."/>
            <person name="Kim C.J."/>
            <person name="Koo H.L."/>
            <person name="Kremenetskaia I."/>
            <person name="Kurtz D.B."/>
            <person name="Kwan A."/>
            <person name="Lam B."/>
            <person name="Langin-Hooper S."/>
            <person name="Lee A."/>
            <person name="Lee J.M."/>
            <person name="Lenz C.A."/>
            <person name="Li J.H."/>
            <person name="Li Y.-P."/>
            <person name="Lin X."/>
            <person name="Liu S.X."/>
            <person name="Liu Z.A."/>
            <person name="Luros J.S."/>
            <person name="Maiti R."/>
            <person name="Marziali A."/>
            <person name="Militscher J."/>
            <person name="Miranda M."/>
            <person name="Nguyen M."/>
            <person name="Nierman W.C."/>
            <person name="Osborne B.I."/>
            <person name="Pai G."/>
            <person name="Peterson J."/>
            <person name="Pham P.K."/>
            <person name="Rizzo M."/>
            <person name="Rooney T."/>
            <person name="Rowley D."/>
            <person name="Sakano H."/>
            <person name="Salzberg S.L."/>
            <person name="Schwartz J.R."/>
            <person name="Shinn P."/>
            <person name="Southwick A.M."/>
            <person name="Sun H."/>
            <person name="Tallon L.J."/>
            <person name="Tambunga G."/>
            <person name="Toriumi M.J."/>
            <person name="Town C.D."/>
            <person name="Utterback T."/>
            <person name="Van Aken S."/>
            <person name="Vaysberg M."/>
            <person name="Vysotskaia V.S."/>
            <person name="Walker M."/>
            <person name="Wu D."/>
            <person name="Yu G."/>
            <person name="Fraser C.M."/>
            <person name="Venter J.C."/>
            <person name="Davis R.W."/>
        </authorList>
    </citation>
    <scope>NUCLEOTIDE SEQUENCE [LARGE SCALE GENOMIC DNA]</scope>
    <source>
        <strain>cv. Columbia</strain>
    </source>
</reference>
<reference key="3">
    <citation type="journal article" date="2017" name="Plant J.">
        <title>Araport11: a complete reannotation of the Arabidopsis thaliana reference genome.</title>
        <authorList>
            <person name="Cheng C.Y."/>
            <person name="Krishnakumar V."/>
            <person name="Chan A.P."/>
            <person name="Thibaud-Nissen F."/>
            <person name="Schobel S."/>
            <person name="Town C.D."/>
        </authorList>
    </citation>
    <scope>GENOME REANNOTATION</scope>
    <source>
        <strain>cv. Columbia</strain>
    </source>
</reference>
<reference key="4">
    <citation type="journal article" date="2003" name="Science">
        <title>Empirical analysis of transcriptional activity in the Arabidopsis genome.</title>
        <authorList>
            <person name="Yamada K."/>
            <person name="Lim J."/>
            <person name="Dale J.M."/>
            <person name="Chen H."/>
            <person name="Shinn P."/>
            <person name="Palm C.J."/>
            <person name="Southwick A.M."/>
            <person name="Wu H.C."/>
            <person name="Kim C.J."/>
            <person name="Nguyen M."/>
            <person name="Pham P.K."/>
            <person name="Cheuk R.F."/>
            <person name="Karlin-Newmann G."/>
            <person name="Liu S.X."/>
            <person name="Lam B."/>
            <person name="Sakano H."/>
            <person name="Wu T."/>
            <person name="Yu G."/>
            <person name="Miranda M."/>
            <person name="Quach H.L."/>
            <person name="Tripp M."/>
            <person name="Chang C.H."/>
            <person name="Lee J.M."/>
            <person name="Toriumi M.J."/>
            <person name="Chan M.M."/>
            <person name="Tang C.C."/>
            <person name="Onodera C.S."/>
            <person name="Deng J.M."/>
            <person name="Akiyama K."/>
            <person name="Ansari Y."/>
            <person name="Arakawa T."/>
            <person name="Banh J."/>
            <person name="Banno F."/>
            <person name="Bowser L."/>
            <person name="Brooks S.Y."/>
            <person name="Carninci P."/>
            <person name="Chao Q."/>
            <person name="Choy N."/>
            <person name="Enju A."/>
            <person name="Goldsmith A.D."/>
            <person name="Gurjal M."/>
            <person name="Hansen N.F."/>
            <person name="Hayashizaki Y."/>
            <person name="Johnson-Hopson C."/>
            <person name="Hsuan V.W."/>
            <person name="Iida K."/>
            <person name="Karnes M."/>
            <person name="Khan S."/>
            <person name="Koesema E."/>
            <person name="Ishida J."/>
            <person name="Jiang P.X."/>
            <person name="Jones T."/>
            <person name="Kawai J."/>
            <person name="Kamiya A."/>
            <person name="Meyers C."/>
            <person name="Nakajima M."/>
            <person name="Narusaka M."/>
            <person name="Seki M."/>
            <person name="Sakurai T."/>
            <person name="Satou M."/>
            <person name="Tamse R."/>
            <person name="Vaysberg M."/>
            <person name="Wallender E.K."/>
            <person name="Wong C."/>
            <person name="Yamamura Y."/>
            <person name="Yuan S."/>
            <person name="Shinozaki K."/>
            <person name="Davis R.W."/>
            <person name="Theologis A."/>
            <person name="Ecker J.R."/>
        </authorList>
    </citation>
    <scope>NUCLEOTIDE SEQUENCE [LARGE SCALE MRNA]</scope>
    <source>
        <strain>cv. Columbia</strain>
    </source>
</reference>
<reference key="5">
    <citation type="submission" date="2002-03" db="EMBL/GenBank/DDBJ databases">
        <title>Full-length cDNA from Arabidopsis thaliana.</title>
        <authorList>
            <person name="Brover V.V."/>
            <person name="Troukhan M.E."/>
            <person name="Alexandrov N.A."/>
            <person name="Lu Y.-P."/>
            <person name="Flavell R.B."/>
            <person name="Feldmann K.A."/>
        </authorList>
    </citation>
    <scope>NUCLEOTIDE SEQUENCE [LARGE SCALE MRNA]</scope>
</reference>